<comment type="function">
    <text evidence="4 5">Component of two multicomponent enzyme systems which are involved in the catabolism of naphthalene (PubMed:11872705, PubMed:9573207). Plays a role as an electron transfer component for both salicylate 5-hydroxylase (S5H) and naphthalene 1,2-dioxygenase (NDO) systems, by transferring electrons from NAD(P)H to the oxygenase component via the ferredoxin NagAb (PubMed:11872705, PubMed:9573207). The electron transport chain from the two systems can use both NADH and NADPH as electron donors at approximately similar rates (PubMed:11872705).</text>
</comment>
<comment type="catalytic activity">
    <reaction evidence="4">
        <text>2 reduced [2Fe-2S]-[ferredoxin] + NAD(+) + H(+) = 2 oxidized [2Fe-2S]-[ferredoxin] + NADH</text>
        <dbReference type="Rhea" id="RHEA:16521"/>
        <dbReference type="Rhea" id="RHEA-COMP:10000"/>
        <dbReference type="Rhea" id="RHEA-COMP:10001"/>
        <dbReference type="ChEBI" id="CHEBI:15378"/>
        <dbReference type="ChEBI" id="CHEBI:33737"/>
        <dbReference type="ChEBI" id="CHEBI:33738"/>
        <dbReference type="ChEBI" id="CHEBI:57540"/>
        <dbReference type="ChEBI" id="CHEBI:57945"/>
        <dbReference type="EC" id="1.18.1.7"/>
    </reaction>
</comment>
<comment type="catalytic activity">
    <reaction evidence="4">
        <text>2 reduced [2Fe-2S]-[ferredoxin] + NADP(+) + H(+) = 2 oxidized [2Fe-2S]-[ferredoxin] + NADPH</text>
        <dbReference type="Rhea" id="RHEA:20125"/>
        <dbReference type="Rhea" id="RHEA-COMP:10000"/>
        <dbReference type="Rhea" id="RHEA-COMP:10001"/>
        <dbReference type="ChEBI" id="CHEBI:15378"/>
        <dbReference type="ChEBI" id="CHEBI:33737"/>
        <dbReference type="ChEBI" id="CHEBI:33738"/>
        <dbReference type="ChEBI" id="CHEBI:57783"/>
        <dbReference type="ChEBI" id="CHEBI:58349"/>
        <dbReference type="EC" id="1.18.1.7"/>
    </reaction>
</comment>
<comment type="cofactor">
    <cofactor evidence="1 2">
        <name>[2Fe-2S] cluster</name>
        <dbReference type="ChEBI" id="CHEBI:190135"/>
    </cofactor>
    <text evidence="2">Binds 1 [2Fe-2S] cluster.</text>
</comment>
<comment type="cofactor">
    <cofactor evidence="1">
        <name>FAD</name>
        <dbReference type="ChEBI" id="CHEBI:57692"/>
    </cofactor>
</comment>
<comment type="pathway">
    <text evidence="4 5">Aromatic compound metabolism; naphthalene degradation.</text>
</comment>
<comment type="subunit">
    <text evidence="4 5">Ferredoxin reductase NagAa belongs to both the salicylate 5-hydroxylase (S5H) and the naphthalene 1,2-dioxygenase (NDO) multicomponent enzyme systems. The NDO multicomponent enzyme system is composed of an electron transfer component and a dioxygenase component (iron sulfur protein (ISP)). The electron transfer component is composed of a ferredoxin reductase (NagAa) and a ferredoxin (NagAb), and the dioxygenase component is formed by a large alpha subunit (NagAc) and a small beta subunit (NagAd). The S5H multicomponent enzyme system is composed of an electron transfer component and a monooxygenase component. The electron transfer component is comprised of a ferredoxin reductase (NagAa) and a ferredoxin (NagAb), and the monooxygenase component is formed by a large subunit (NagG) and a small subunit (NagH).</text>
</comment>
<comment type="similarity">
    <text evidence="8">Belongs to the bacterial ring-hydroxylating dioxygenase ferredoxin reductase family.</text>
</comment>
<accession>O52378</accession>
<gene>
    <name evidence="7" type="primary">nagAa</name>
</gene>
<protein>
    <recommendedName>
        <fullName evidence="6">Naphthalene 1,2-dioxygenase/salicylate 5-hydroxylase systems, ferredoxin--NAD(P)(+), reductase component</fullName>
        <shortName evidence="6">NDO/S5H systems, ferredoxin--NAD(P)(+), reductase component</shortName>
        <ecNumber evidence="4">1.18.1.7</ecNumber>
    </recommendedName>
    <alternativeName>
        <fullName evidence="7">Ferredoxin reductase NagAa</fullName>
    </alternativeName>
    <alternativeName>
        <fullName evidence="7">Ferredoxin--NAD(P)(+) reductase (naphthalene dioxygenase/salicylate 5-hydroxylase ferredoxin-specific)</fullName>
    </alternativeName>
</protein>
<proteinExistence type="evidence at protein level"/>
<sequence>MELVVEPLNLHLNAETGSTLLDVLRSNEVPISYSCMSGRCGTCRCRVIAGHLRDNGPETGRPQAGKGTYVLACQAVLTEDCTIEIPESDEIVVHPARIVKGTVTAIDEATHDIRRLRIKLAKPLEFSPGQYATVQFTPECVRPYSMAGLPSDAEMEFQIRAVPGGHVSNYVFNELSVGASVRISGPLGTAYLRRTHTGPMLCVGGGTGLAPVLSIVRGALESGMSNPIHLYFGVRSEQDIYDEERLHALAARFPNLKVNVVVATGPAGPGRRSGLVTDLIGRDLPNLAGWRAYLCGAPAMVEALNLLVARLGIVPGHIHADAFYPSGV</sequence>
<name>NAGAA_RALSP</name>
<dbReference type="EC" id="1.18.1.7" evidence="4"/>
<dbReference type="EMBL" id="AF036940">
    <property type="protein sequence ID" value="AAD12606.1"/>
    <property type="molecule type" value="Genomic_DNA"/>
</dbReference>
<dbReference type="SMR" id="O52378"/>
<dbReference type="KEGG" id="ag:AAD12606"/>
<dbReference type="BRENDA" id="1.18.1.7">
    <property type="organism ID" value="5275"/>
</dbReference>
<dbReference type="UniPathway" id="UPA00082"/>
<dbReference type="GO" id="GO:1902494">
    <property type="term" value="C:catalytic complex"/>
    <property type="evidence" value="ECO:0000314"/>
    <property type="project" value="UniProtKB"/>
</dbReference>
<dbReference type="GO" id="GO:0051537">
    <property type="term" value="F:2 iron, 2 sulfur cluster binding"/>
    <property type="evidence" value="ECO:0007669"/>
    <property type="project" value="UniProtKB-KW"/>
</dbReference>
<dbReference type="GO" id="GO:0008860">
    <property type="term" value="F:ferredoxin-NAD+ reductase activity"/>
    <property type="evidence" value="ECO:0007669"/>
    <property type="project" value="RHEA"/>
</dbReference>
<dbReference type="GO" id="GO:0004324">
    <property type="term" value="F:ferredoxin-NADP+ reductase activity"/>
    <property type="evidence" value="ECO:0007669"/>
    <property type="project" value="RHEA"/>
</dbReference>
<dbReference type="GO" id="GO:0046872">
    <property type="term" value="F:metal ion binding"/>
    <property type="evidence" value="ECO:0007669"/>
    <property type="project" value="UniProtKB-KW"/>
</dbReference>
<dbReference type="GO" id="GO:0022900">
    <property type="term" value="P:electron transport chain"/>
    <property type="evidence" value="ECO:0000314"/>
    <property type="project" value="UniProtKB"/>
</dbReference>
<dbReference type="GO" id="GO:1901170">
    <property type="term" value="P:naphthalene catabolic process"/>
    <property type="evidence" value="ECO:0000314"/>
    <property type="project" value="UniProtKB"/>
</dbReference>
<dbReference type="GO" id="GO:0046244">
    <property type="term" value="P:salicylic acid catabolic process"/>
    <property type="evidence" value="ECO:0000314"/>
    <property type="project" value="UniProtKB"/>
</dbReference>
<dbReference type="CDD" id="cd00207">
    <property type="entry name" value="fer2"/>
    <property type="match status" value="1"/>
</dbReference>
<dbReference type="CDD" id="cd06187">
    <property type="entry name" value="O2ase_reductase_like"/>
    <property type="match status" value="1"/>
</dbReference>
<dbReference type="FunFam" id="2.40.30.10:FF:000093">
    <property type="entry name" value="Naphthalene 1,2-dioxygenase reductase component"/>
    <property type="match status" value="1"/>
</dbReference>
<dbReference type="FunFam" id="3.40.50.80:FF:000047">
    <property type="entry name" value="Naphthalene 1,2-dioxygenase reductase component"/>
    <property type="match status" value="1"/>
</dbReference>
<dbReference type="Gene3D" id="3.10.20.30">
    <property type="match status" value="1"/>
</dbReference>
<dbReference type="Gene3D" id="3.40.50.80">
    <property type="entry name" value="Nucleotide-binding domain of ferredoxin-NADP reductase (FNR) module"/>
    <property type="match status" value="1"/>
</dbReference>
<dbReference type="Gene3D" id="2.40.30.10">
    <property type="entry name" value="Translation factors"/>
    <property type="match status" value="1"/>
</dbReference>
<dbReference type="InterPro" id="IPR036010">
    <property type="entry name" value="2Fe-2S_ferredoxin-like_sf"/>
</dbReference>
<dbReference type="InterPro" id="IPR001041">
    <property type="entry name" value="2Fe-2S_ferredoxin-type"/>
</dbReference>
<dbReference type="InterPro" id="IPR006058">
    <property type="entry name" value="2Fe2S_fd_BS"/>
</dbReference>
<dbReference type="InterPro" id="IPR012675">
    <property type="entry name" value="Beta-grasp_dom_sf"/>
</dbReference>
<dbReference type="InterPro" id="IPR008333">
    <property type="entry name" value="Cbr1-like_FAD-bd_dom"/>
</dbReference>
<dbReference type="InterPro" id="IPR017927">
    <property type="entry name" value="FAD-bd_FR_type"/>
</dbReference>
<dbReference type="InterPro" id="IPR001709">
    <property type="entry name" value="Flavoprot_Pyr_Nucl_cyt_Rdtase"/>
</dbReference>
<dbReference type="InterPro" id="IPR039261">
    <property type="entry name" value="FNR_nucleotide-bd"/>
</dbReference>
<dbReference type="InterPro" id="IPR050415">
    <property type="entry name" value="MRET"/>
</dbReference>
<dbReference type="InterPro" id="IPR001433">
    <property type="entry name" value="OxRdtase_FAD/NAD-bd"/>
</dbReference>
<dbReference type="InterPro" id="IPR017938">
    <property type="entry name" value="Riboflavin_synthase-like_b-brl"/>
</dbReference>
<dbReference type="PANTHER" id="PTHR47354">
    <property type="entry name" value="NADH OXIDOREDUCTASE HCR"/>
    <property type="match status" value="1"/>
</dbReference>
<dbReference type="PANTHER" id="PTHR47354:SF5">
    <property type="entry name" value="PROTEIN RFBI"/>
    <property type="match status" value="1"/>
</dbReference>
<dbReference type="Pfam" id="PF00970">
    <property type="entry name" value="FAD_binding_6"/>
    <property type="match status" value="1"/>
</dbReference>
<dbReference type="Pfam" id="PF00111">
    <property type="entry name" value="Fer2"/>
    <property type="match status" value="1"/>
</dbReference>
<dbReference type="Pfam" id="PF00175">
    <property type="entry name" value="NAD_binding_1"/>
    <property type="match status" value="1"/>
</dbReference>
<dbReference type="PRINTS" id="PR00371">
    <property type="entry name" value="FPNCR"/>
</dbReference>
<dbReference type="PRINTS" id="PR00410">
    <property type="entry name" value="PHEHYDRXLASE"/>
</dbReference>
<dbReference type="SUPFAM" id="SSF54292">
    <property type="entry name" value="2Fe-2S ferredoxin-like"/>
    <property type="match status" value="1"/>
</dbReference>
<dbReference type="SUPFAM" id="SSF52343">
    <property type="entry name" value="Ferredoxin reductase-like, C-terminal NADP-linked domain"/>
    <property type="match status" value="1"/>
</dbReference>
<dbReference type="SUPFAM" id="SSF63380">
    <property type="entry name" value="Riboflavin synthase domain-like"/>
    <property type="match status" value="1"/>
</dbReference>
<dbReference type="PROSITE" id="PS00197">
    <property type="entry name" value="2FE2S_FER_1"/>
    <property type="match status" value="1"/>
</dbReference>
<dbReference type="PROSITE" id="PS51085">
    <property type="entry name" value="2FE2S_FER_2"/>
    <property type="match status" value="1"/>
</dbReference>
<dbReference type="PROSITE" id="PS51384">
    <property type="entry name" value="FAD_FR"/>
    <property type="match status" value="1"/>
</dbReference>
<keyword id="KW-0001">2Fe-2S</keyword>
<keyword id="KW-0058">Aromatic hydrocarbons catabolism</keyword>
<keyword id="KW-0274">FAD</keyword>
<keyword id="KW-0285">Flavoprotein</keyword>
<keyword id="KW-0408">Iron</keyword>
<keyword id="KW-0411">Iron-sulfur</keyword>
<keyword id="KW-0479">Metal-binding</keyword>
<keyword id="KW-0520">NAD</keyword>
<keyword id="KW-0521">NADP</keyword>
<keyword id="KW-0560">Oxidoreductase</keyword>
<keyword id="KW-0614">Plasmid</keyword>
<geneLocation type="plasmid" evidence="9">
    <name>pWWU2</name>
</geneLocation>
<feature type="chain" id="PRO_0000421806" description="Naphthalene 1,2-dioxygenase/salicylate 5-hydroxylase systems, ferredoxin--NAD(P)(+), reductase component">
    <location>
        <begin position="1"/>
        <end position="328"/>
    </location>
</feature>
<feature type="domain" description="2Fe-2S ferredoxin-type" evidence="2">
    <location>
        <begin position="1"/>
        <end position="89"/>
    </location>
</feature>
<feature type="domain" description="FAD-binding FR-type" evidence="3">
    <location>
        <begin position="96"/>
        <end position="193"/>
    </location>
</feature>
<feature type="binding site" evidence="2">
    <location>
        <position position="35"/>
    </location>
    <ligand>
        <name>[2Fe-2S] cluster</name>
        <dbReference type="ChEBI" id="CHEBI:190135"/>
    </ligand>
</feature>
<feature type="binding site" evidence="2">
    <location>
        <position position="40"/>
    </location>
    <ligand>
        <name>[2Fe-2S] cluster</name>
        <dbReference type="ChEBI" id="CHEBI:190135"/>
    </ligand>
</feature>
<feature type="binding site" evidence="2">
    <location>
        <position position="43"/>
    </location>
    <ligand>
        <name>[2Fe-2S] cluster</name>
        <dbReference type="ChEBI" id="CHEBI:190135"/>
    </ligand>
</feature>
<feature type="binding site" evidence="2">
    <location>
        <position position="73"/>
    </location>
    <ligand>
        <name>[2Fe-2S] cluster</name>
        <dbReference type="ChEBI" id="CHEBI:190135"/>
    </ligand>
</feature>
<reference key="1">
    <citation type="journal article" date="1998" name="J. Bacteriol.">
        <title>A gene cluster encoding steps in conversion of naphthalene to gentisate in Pseudomonas sp. strain U2.</title>
        <authorList>
            <person name="Fuenmayor S.L."/>
            <person name="Wild M."/>
            <person name="Boyes A.L."/>
            <person name="Williams P.A."/>
        </authorList>
    </citation>
    <scope>NUCLEOTIDE SEQUENCE [GENOMIC DNA]</scope>
    <scope>FUNCTION</scope>
    <scope>PATHWAY</scope>
    <scope>SUBUNIT</scope>
    <source>
        <strain evidence="9">U2</strain>
    </source>
</reference>
<reference key="2">
    <citation type="journal article" date="2002" name="J. Bacteriol.">
        <title>Salicylate 5-hydroxylase from Ralstonia sp. strain U2: a monooxygenase with close relationships to and shared electron transport proteins with naphthalene dioxygenase.</title>
        <authorList>
            <person name="Zhou N.Y."/>
            <person name="Al-Dulayymi J."/>
            <person name="Baird M.S."/>
            <person name="Williams P.A."/>
        </authorList>
    </citation>
    <scope>FUNCTION</scope>
    <scope>CATALYTIC ACTIVITY</scope>
    <scope>SUBSTRATE SPECIFICITY</scope>
    <scope>PATHWAY</scope>
    <scope>SUBUNIT</scope>
    <source>
        <strain>U2</strain>
    </source>
</reference>
<evidence type="ECO:0000250" key="1">
    <source>
        <dbReference type="UniProtKB" id="Q52126"/>
    </source>
</evidence>
<evidence type="ECO:0000255" key="2">
    <source>
        <dbReference type="PROSITE-ProRule" id="PRU00465"/>
    </source>
</evidence>
<evidence type="ECO:0000255" key="3">
    <source>
        <dbReference type="PROSITE-ProRule" id="PRU00716"/>
    </source>
</evidence>
<evidence type="ECO:0000269" key="4">
    <source>
    </source>
</evidence>
<evidence type="ECO:0000269" key="5">
    <source>
    </source>
</evidence>
<evidence type="ECO:0000303" key="6">
    <source>
    </source>
</evidence>
<evidence type="ECO:0000303" key="7">
    <source>
    </source>
</evidence>
<evidence type="ECO:0000305" key="8"/>
<evidence type="ECO:0000312" key="9">
    <source>
        <dbReference type="EMBL" id="AAD12606.1"/>
    </source>
</evidence>
<organism>
    <name type="scientific">Ralstonia sp</name>
    <dbReference type="NCBI Taxonomy" id="54061"/>
    <lineage>
        <taxon>Bacteria</taxon>
        <taxon>Pseudomonadati</taxon>
        <taxon>Pseudomonadota</taxon>
        <taxon>Betaproteobacteria</taxon>
        <taxon>Burkholderiales</taxon>
        <taxon>Burkholderiaceae</taxon>
        <taxon>Ralstonia</taxon>
    </lineage>
</organism>